<name>MENG_MYCTA</name>
<accession>A5TZT8</accession>
<gene>
    <name evidence="1" type="primary">menG</name>
    <name type="ordered locus">MRA_0565</name>
</gene>
<comment type="function">
    <text evidence="1">Methyltransferase required for the conversion of demethylmenaquinol (DMKH2) to menaquinol (MKH2).</text>
</comment>
<comment type="catalytic activity">
    <reaction evidence="1">
        <text>a 2-demethylmenaquinol + S-adenosyl-L-methionine = a menaquinol + S-adenosyl-L-homocysteine + H(+)</text>
        <dbReference type="Rhea" id="RHEA:42640"/>
        <dbReference type="Rhea" id="RHEA-COMP:9539"/>
        <dbReference type="Rhea" id="RHEA-COMP:9563"/>
        <dbReference type="ChEBI" id="CHEBI:15378"/>
        <dbReference type="ChEBI" id="CHEBI:18151"/>
        <dbReference type="ChEBI" id="CHEBI:55437"/>
        <dbReference type="ChEBI" id="CHEBI:57856"/>
        <dbReference type="ChEBI" id="CHEBI:59789"/>
        <dbReference type="EC" id="2.1.1.163"/>
    </reaction>
</comment>
<comment type="pathway">
    <text evidence="1">Quinol/quinone metabolism; menaquinone biosynthesis; menaquinol from 1,4-dihydroxy-2-naphthoate: step 2/2.</text>
</comment>
<comment type="similarity">
    <text evidence="1">Belongs to the class I-like SAM-binding methyltransferase superfamily. MenG/UbiE family.</text>
</comment>
<organism>
    <name type="scientific">Mycobacterium tuberculosis (strain ATCC 25177 / H37Ra)</name>
    <dbReference type="NCBI Taxonomy" id="419947"/>
    <lineage>
        <taxon>Bacteria</taxon>
        <taxon>Bacillati</taxon>
        <taxon>Actinomycetota</taxon>
        <taxon>Actinomycetes</taxon>
        <taxon>Mycobacteriales</taxon>
        <taxon>Mycobacteriaceae</taxon>
        <taxon>Mycobacterium</taxon>
        <taxon>Mycobacterium tuberculosis complex</taxon>
    </lineage>
</organism>
<feature type="chain" id="PRO_1000056262" description="Demethylmenaquinone methyltransferase">
    <location>
        <begin position="1"/>
        <end position="234"/>
    </location>
</feature>
<feature type="binding site" evidence="1">
    <location>
        <position position="62"/>
    </location>
    <ligand>
        <name>S-adenosyl-L-methionine</name>
        <dbReference type="ChEBI" id="CHEBI:59789"/>
    </ligand>
</feature>
<feature type="binding site" evidence="1">
    <location>
        <position position="80"/>
    </location>
    <ligand>
        <name>S-adenosyl-L-methionine</name>
        <dbReference type="ChEBI" id="CHEBI:59789"/>
    </ligand>
</feature>
<feature type="binding site" evidence="1">
    <location>
        <begin position="100"/>
        <end position="101"/>
    </location>
    <ligand>
        <name>S-adenosyl-L-methionine</name>
        <dbReference type="ChEBI" id="CHEBI:59789"/>
    </ligand>
</feature>
<feature type="binding site" evidence="1">
    <location>
        <position position="117"/>
    </location>
    <ligand>
        <name>S-adenosyl-L-methionine</name>
        <dbReference type="ChEBI" id="CHEBI:59789"/>
    </ligand>
</feature>
<protein>
    <recommendedName>
        <fullName evidence="1">Demethylmenaquinone methyltransferase</fullName>
        <ecNumber evidence="1">2.1.1.163</ecNumber>
    </recommendedName>
</protein>
<dbReference type="EC" id="2.1.1.163" evidence="1"/>
<dbReference type="EMBL" id="CP000611">
    <property type="protein sequence ID" value="ABQ72288.1"/>
    <property type="molecule type" value="Genomic_DNA"/>
</dbReference>
<dbReference type="RefSeq" id="WP_003402936.1">
    <property type="nucleotide sequence ID" value="NZ_CP016972.1"/>
</dbReference>
<dbReference type="SMR" id="A5TZT8"/>
<dbReference type="KEGG" id="mra:MRA_0565"/>
<dbReference type="eggNOG" id="COG2226">
    <property type="taxonomic scope" value="Bacteria"/>
</dbReference>
<dbReference type="HOGENOM" id="CLU_037990_0_0_11"/>
<dbReference type="UniPathway" id="UPA00079">
    <property type="reaction ID" value="UER00169"/>
</dbReference>
<dbReference type="Proteomes" id="UP000001988">
    <property type="component" value="Chromosome"/>
</dbReference>
<dbReference type="GO" id="GO:0043770">
    <property type="term" value="F:demethylmenaquinone methyltransferase activity"/>
    <property type="evidence" value="ECO:0007669"/>
    <property type="project" value="UniProtKB-UniRule"/>
</dbReference>
<dbReference type="GO" id="GO:0009234">
    <property type="term" value="P:menaquinone biosynthetic process"/>
    <property type="evidence" value="ECO:0007669"/>
    <property type="project" value="UniProtKB-UniRule"/>
</dbReference>
<dbReference type="GO" id="GO:0032259">
    <property type="term" value="P:methylation"/>
    <property type="evidence" value="ECO:0007669"/>
    <property type="project" value="UniProtKB-KW"/>
</dbReference>
<dbReference type="CDD" id="cd02440">
    <property type="entry name" value="AdoMet_MTases"/>
    <property type="match status" value="1"/>
</dbReference>
<dbReference type="FunFam" id="3.40.50.150:FF:000373">
    <property type="entry name" value="Demethylmenaquinone methyltransferase"/>
    <property type="match status" value="1"/>
</dbReference>
<dbReference type="Gene3D" id="3.40.50.150">
    <property type="entry name" value="Vaccinia Virus protein VP39"/>
    <property type="match status" value="1"/>
</dbReference>
<dbReference type="HAMAP" id="MF_01813">
    <property type="entry name" value="MenG_UbiE_methyltr"/>
    <property type="match status" value="1"/>
</dbReference>
<dbReference type="InterPro" id="IPR029063">
    <property type="entry name" value="SAM-dependent_MTases_sf"/>
</dbReference>
<dbReference type="InterPro" id="IPR004033">
    <property type="entry name" value="UbiE/COQ5_MeTrFase"/>
</dbReference>
<dbReference type="InterPro" id="IPR023576">
    <property type="entry name" value="UbiE/COQ5_MeTrFase_CS"/>
</dbReference>
<dbReference type="NCBIfam" id="TIGR01934">
    <property type="entry name" value="MenG_MenH_UbiE"/>
    <property type="match status" value="1"/>
</dbReference>
<dbReference type="NCBIfam" id="NF001241">
    <property type="entry name" value="PRK00216.1-2"/>
    <property type="match status" value="1"/>
</dbReference>
<dbReference type="PANTHER" id="PTHR43591:SF24">
    <property type="entry name" value="2-METHOXY-6-POLYPRENYL-1,4-BENZOQUINOL METHYLASE, MITOCHONDRIAL"/>
    <property type="match status" value="1"/>
</dbReference>
<dbReference type="PANTHER" id="PTHR43591">
    <property type="entry name" value="METHYLTRANSFERASE"/>
    <property type="match status" value="1"/>
</dbReference>
<dbReference type="Pfam" id="PF01209">
    <property type="entry name" value="Ubie_methyltran"/>
    <property type="match status" value="1"/>
</dbReference>
<dbReference type="SUPFAM" id="SSF53335">
    <property type="entry name" value="S-adenosyl-L-methionine-dependent methyltransferases"/>
    <property type="match status" value="1"/>
</dbReference>
<dbReference type="PROSITE" id="PS51608">
    <property type="entry name" value="SAM_MT_UBIE"/>
    <property type="match status" value="1"/>
</dbReference>
<dbReference type="PROSITE" id="PS01183">
    <property type="entry name" value="UBIE_1"/>
    <property type="match status" value="1"/>
</dbReference>
<dbReference type="PROSITE" id="PS01184">
    <property type="entry name" value="UBIE_2"/>
    <property type="match status" value="1"/>
</dbReference>
<proteinExistence type="inferred from homology"/>
<reference key="1">
    <citation type="journal article" date="2008" name="PLoS ONE">
        <title>Genetic basis of virulence attenuation revealed by comparative genomic analysis of Mycobacterium tuberculosis strain H37Ra versus H37Rv.</title>
        <authorList>
            <person name="Zheng H."/>
            <person name="Lu L."/>
            <person name="Wang B."/>
            <person name="Pu S."/>
            <person name="Zhang X."/>
            <person name="Zhu G."/>
            <person name="Shi W."/>
            <person name="Zhang L."/>
            <person name="Wang H."/>
            <person name="Wang S."/>
            <person name="Zhao G."/>
            <person name="Zhang Y."/>
        </authorList>
    </citation>
    <scope>NUCLEOTIDE SEQUENCE [LARGE SCALE GENOMIC DNA]</scope>
    <source>
        <strain>ATCC 25177 / H37Ra</strain>
    </source>
</reference>
<evidence type="ECO:0000255" key="1">
    <source>
        <dbReference type="HAMAP-Rule" id="MF_01813"/>
    </source>
</evidence>
<sequence>MSRAALDKDPRDVASMFDGVARKYDLTNTVLSLGQDRYWRRATRSALRIGPGQKVLDLAAGTAVSTVELTKSGAWCVAADFSVGMLAAGAARKVPKVAGDATRLPFGDDVFDAVTISFGLRNVANQQAALREMARVTRPGGRLLVCEFSTPTNALFATAYKEYLMRALPRVARAVSSNPEAYEYLAESIRAWPDQAVLAHQISRAGWSGVRWRNLTGGIVALHAGYKPGKQTPQ</sequence>
<keyword id="KW-0474">Menaquinone biosynthesis</keyword>
<keyword id="KW-0489">Methyltransferase</keyword>
<keyword id="KW-1185">Reference proteome</keyword>
<keyword id="KW-0949">S-adenosyl-L-methionine</keyword>
<keyword id="KW-0808">Transferase</keyword>